<reference key="1">
    <citation type="journal article" date="2010" name="Plant Physiol.">
        <title>Two host cytoplasmic effectors are required for pathogenesis of Phytophthora sojae by suppression of host defenses.</title>
        <authorList>
            <person name="Liu T."/>
            <person name="Ye W."/>
            <person name="Ru Y."/>
            <person name="Yang X."/>
            <person name="Gu B."/>
            <person name="Tao K."/>
            <person name="Lu S."/>
            <person name="Dong S."/>
            <person name="Zheng X."/>
            <person name="Shan W."/>
            <person name="Wang Y."/>
            <person name="Dou D."/>
        </authorList>
    </citation>
    <scope>NUCLEOTIDE SEQUENCE [MRNA]</scope>
    <scope>INDUCTION</scope>
    <scope>FUNCTION</scope>
    <scope>DISRUPTION PHENOTYPE</scope>
    <scope>DOMAIN</scope>
    <scope>SUBCELLULAR LOCATION</scope>
    <source>
        <strain>P6497</strain>
    </source>
</reference>
<reference key="2">
    <citation type="journal article" date="2006" name="Science">
        <title>Phytophthora genome sequences uncover evolutionary origins and mechanisms of pathogenesis.</title>
        <authorList>
            <person name="Tyler B.M."/>
            <person name="Tripathy S."/>
            <person name="Zhang X."/>
            <person name="Dehal P."/>
            <person name="Jiang R.H.Y."/>
            <person name="Aerts A."/>
            <person name="Arredondo F.D."/>
            <person name="Baxter L."/>
            <person name="Bensasson D."/>
            <person name="Beynon J.L."/>
            <person name="Chapman J."/>
            <person name="Damasceno C.M.B."/>
            <person name="Dorrance A.E."/>
            <person name="Dou D."/>
            <person name="Dickerman A.W."/>
            <person name="Dubchak I.L."/>
            <person name="Garbelotto M."/>
            <person name="Gijzen M."/>
            <person name="Gordon S.G."/>
            <person name="Govers F."/>
            <person name="Grunwald N.J."/>
            <person name="Huang W."/>
            <person name="Ivors K.L."/>
            <person name="Jones R.W."/>
            <person name="Kamoun S."/>
            <person name="Krampis K."/>
            <person name="Lamour K.H."/>
            <person name="Lee M.-K."/>
            <person name="McDonald W.H."/>
            <person name="Medina M."/>
            <person name="Meijer H.J.G."/>
            <person name="Nordberg E.K."/>
            <person name="Maclean D.J."/>
            <person name="Ospina-Giraldo M.D."/>
            <person name="Morris P.F."/>
            <person name="Phuntumart V."/>
            <person name="Putnam N.H."/>
            <person name="Rash S."/>
            <person name="Rose J.K.C."/>
            <person name="Sakihama Y."/>
            <person name="Salamov A.A."/>
            <person name="Savidor A."/>
            <person name="Scheuring C.F."/>
            <person name="Smith B.M."/>
            <person name="Sobral B.W.S."/>
            <person name="Terry A."/>
            <person name="Torto-Alalibo T.A."/>
            <person name="Win J."/>
            <person name="Xu Z."/>
            <person name="Zhang H."/>
            <person name="Grigoriev I.V."/>
            <person name="Rokhsar D.S."/>
            <person name="Boore J.L."/>
        </authorList>
    </citation>
    <scope>NUCLEOTIDE SEQUENCE [LARGE SCALE GENOMIC DNA]</scope>
    <source>
        <strain>P6497</strain>
    </source>
</reference>
<reference key="3">
    <citation type="journal article" date="2016" name="Sci. Rep.">
        <title>A Phytophthora sojae effector PsCRN63 forms homo-/hetero-dimers to suppress plant immunity via an inverted association manner.</title>
        <authorList>
            <person name="Li Q."/>
            <person name="Zhang M."/>
            <person name="Shen D."/>
            <person name="Liu T."/>
            <person name="Chen Y."/>
            <person name="Zhou J.M."/>
            <person name="Dou D."/>
        </authorList>
    </citation>
    <scope>FUNCTION</scope>
    <scope>MUTAGENESIS OF LYS-329</scope>
    <scope>SUBUNIT</scope>
    <scope>INTERACTION WITH CRN79 AND CRN115</scope>
</reference>
<gene>
    <name evidence="5" type="primary">CRN63</name>
    <name type="ORF">PHYSODRAFT_253824</name>
</gene>
<sequence>MVKLFCAIVGAAGSAFPVDIDAGQSAGDLKDAIKAKNPATITCDAKDLQLSLAKTADGAWLPDDDQAALDLEDGKVHEDIQALIDGEKMKATWTIEDVLTANNMTKRKGRAPKSRQIHVLVVVPEGAFGSASETSKMDQLVEKVDKMYEQTVLGKRKYVHSEVTSTQGRQLLNDLDIRVEFVRTVPFDAGEGSSVDPYEWKRVIIENGEEVVLTEEQQRKRYRRYVEHNIGAVLKEKQLCVIGVERGTNILTVKVPGREIELAGRTDLLILSDLVAMRPTEVQYLPGVKMLIEVKRDVKASNDFQALSELIALDLLVDDPVMALLTDLKGEWIFFWVAEKINSSARIHKAAINKPGEAFEVIRALLVQPPTAPADTDTTEIKLPCFQSPVKRLKLRKALPPIGEGGDNGGIRESIERYYDIASMLGPDIEMARAVARQVTRSIPTFSYFS</sequence>
<keyword id="KW-0325">Glycoprotein</keyword>
<keyword id="KW-1048">Host nucleus</keyword>
<keyword id="KW-1185">Reference proteome</keyword>
<keyword id="KW-0964">Secreted</keyword>
<keyword id="KW-0732">Signal</keyword>
<evidence type="ECO:0000255" key="1"/>
<evidence type="ECO:0000255" key="2">
    <source>
        <dbReference type="PROSITE-ProRule" id="PRU00498"/>
    </source>
</evidence>
<evidence type="ECO:0000269" key="3">
    <source>
    </source>
</evidence>
<evidence type="ECO:0000269" key="4">
    <source>
    </source>
</evidence>
<evidence type="ECO:0000303" key="5">
    <source>
    </source>
</evidence>
<evidence type="ECO:0000305" key="6"/>
<evidence type="ECO:0000305" key="7">
    <source>
    </source>
</evidence>
<comment type="function">
    <text evidence="3 4">Secreted effector that, with CRN115, is critical to pathogenesis by modulating host defenses (PubMed:21071601). Induces cell death in plant host cells (PubMed:21071601). Suppresses callose deposition and affects expression of defense-related genes including two salicylic acid (SA) signal-induced and antimicrobial PR genes (PR1 and PR2), and genes involved in jasmonic acid (JA)/ethylene (ET)-mediated defense pathway (ERF1, ORA59, PDF1.2) (PubMed:27243217). CRN115 and CRN63 may share the same molecular host targets that are involved in the cell death signal transduction pathway and that their differential activities are dependent on plant nuclear localization or not (PubMed:21071601). Does not affect MAPK activation and BIK1 phosphorylation and acts downstream of the MAPK cascades in PTI signaling (PubMed:27243217).</text>
</comment>
<comment type="subunit">
    <text evidence="4">Forms a homodimer via an inverted association manner (PubMed:27243217). Forms heterodimers with CRN79 and CRN115 (PubMed:27243217).</text>
</comment>
<comment type="subcellular location">
    <subcellularLocation>
        <location evidence="3">Secreted</location>
    </subcellularLocation>
    <subcellularLocation>
        <location evidence="3">Host nucleus</location>
        <location evidence="3">Host nucleoplasm</location>
    </subcellularLocation>
</comment>
<comment type="induction">
    <text evidence="3">Expression is constitutively high and slightly induced during the late infection stages (approximately 1.5-fold).</text>
</comment>
<comment type="domain">
    <text evidence="7">The CRN proteins have modular architectures that include a signal peptide, a conserved N-terminus, and highly diverse C-terminal domains. The conserved CRN N-terminus harbors a distinct LXLFLAK motif, which is followed by the conserved DWL domain. A highly conserved HVLVXXP motif marks the end of the CRN N-terminal domains and forms a junction where diverse C-terminal domains are fused. The conserved CRN N-terminus mediates the translocation into the plant host cells.</text>
</comment>
<comment type="domain">
    <text evidence="3">The C-terminal effector region is sufficient for its activity within the host cell.</text>
</comment>
<comment type="domain">
    <text evidence="3">The predicted NLS is required for its function to induce cell death in plant host cells.</text>
</comment>
<comment type="disruption phenotype">
    <text evidence="3">Leads to a reduction of virulence on soybean.</text>
</comment>
<comment type="similarity">
    <text evidence="6">Belongs to the Crinkler effector family.</text>
</comment>
<dbReference type="EMBL" id="HQ231783">
    <property type="protein sequence ID" value="ADU87013.1"/>
    <property type="molecule type" value="mRNA"/>
</dbReference>
<dbReference type="EMBL" id="JH159152">
    <property type="protein sequence ID" value="EGZ22908.1"/>
    <property type="molecule type" value="Genomic_DNA"/>
</dbReference>
<dbReference type="RefSeq" id="XP_009518196.1">
    <property type="nucleotide sequence ID" value="XM_009519901.1"/>
</dbReference>
<dbReference type="STRING" id="1094619.G4YRT1"/>
<dbReference type="GlyCosmos" id="G4YRT1">
    <property type="glycosylation" value="2 sites, No reported glycans"/>
</dbReference>
<dbReference type="EnsemblProtists" id="EGZ22908">
    <property type="protein sequence ID" value="EGZ22908"/>
    <property type="gene ID" value="PHYSODRAFT_253824"/>
</dbReference>
<dbReference type="GeneID" id="20638420"/>
<dbReference type="KEGG" id="psoj:PHYSODRAFT_253824"/>
<dbReference type="HOGENOM" id="CLU_054504_1_0_1"/>
<dbReference type="InParanoid" id="G4YRT1"/>
<dbReference type="Proteomes" id="UP000002640">
    <property type="component" value="Unassembled WGS sequence"/>
</dbReference>
<dbReference type="GO" id="GO:0005576">
    <property type="term" value="C:extracellular region"/>
    <property type="evidence" value="ECO:0007669"/>
    <property type="project" value="UniProtKB-SubCell"/>
</dbReference>
<dbReference type="GO" id="GO:0044095">
    <property type="term" value="C:host cell nucleoplasm"/>
    <property type="evidence" value="ECO:0007669"/>
    <property type="project" value="UniProtKB-SubCell"/>
</dbReference>
<dbReference type="InterPro" id="IPR045379">
    <property type="entry name" value="Crinkler_N"/>
</dbReference>
<dbReference type="Pfam" id="PF20147">
    <property type="entry name" value="Crinkler"/>
    <property type="match status" value="1"/>
</dbReference>
<proteinExistence type="evidence at protein level"/>
<feature type="signal peptide" evidence="1">
    <location>
        <begin position="1"/>
        <end position="17"/>
    </location>
</feature>
<feature type="chain" id="PRO_0000447894" description="Crinkler effector protein 63">
    <location>
        <begin position="18"/>
        <end position="450"/>
    </location>
</feature>
<feature type="region of interest" description="LQLFLAK domain" evidence="7">
    <location>
        <begin position="18"/>
        <end position="55"/>
    </location>
</feature>
<feature type="region of interest" description="DWL domain" evidence="7">
    <location>
        <begin position="58"/>
        <end position="117"/>
    </location>
</feature>
<feature type="region of interest" description="Effector domain" evidence="7">
    <location>
        <begin position="125"/>
        <end position="450"/>
    </location>
</feature>
<feature type="short sequence motif" description="HVLVXXP motif" evidence="7">
    <location>
        <begin position="118"/>
        <end position="124"/>
    </location>
</feature>
<feature type="short sequence motif" description="Nuclear localization signal (NLS)" evidence="7">
    <location>
        <begin position="218"/>
        <end position="224"/>
    </location>
</feature>
<feature type="glycosylation site" description="N-linked (GlcNAc...) asparagine" evidence="2">
    <location>
        <position position="103"/>
    </location>
</feature>
<feature type="glycosylation site" description="N-linked (GlcNAc...) asparagine" evidence="2">
    <location>
        <position position="342"/>
    </location>
</feature>
<feature type="mutagenesis site" description="Completely abolishes the cell death-inducing activity." evidence="4">
    <original>K</original>
    <variation>E</variation>
    <location>
        <position position="329"/>
    </location>
</feature>
<organism>
    <name type="scientific">Phytophthora sojae (strain P6497)</name>
    <name type="common">Soybean stem and root rot agent</name>
    <name type="synonym">Phytophthora megasperma f. sp. glycines</name>
    <dbReference type="NCBI Taxonomy" id="1094619"/>
    <lineage>
        <taxon>Eukaryota</taxon>
        <taxon>Sar</taxon>
        <taxon>Stramenopiles</taxon>
        <taxon>Oomycota</taxon>
        <taxon>Peronosporales</taxon>
        <taxon>Peronosporaceae</taxon>
        <taxon>Phytophthora</taxon>
    </lineage>
</organism>
<accession>G4YRT1</accession>
<accession>E9M7A0</accession>
<name>CRN63_PHYSP</name>
<protein>
    <recommendedName>
        <fullName evidence="5">Crinkler effector protein 63</fullName>
    </recommendedName>
</protein>